<gene>
    <name evidence="1" type="primary">rph</name>
    <name type="ordered locus">CPF_2536</name>
</gene>
<accession>Q0TN64</accession>
<dbReference type="EC" id="2.7.7.56" evidence="1"/>
<dbReference type="EMBL" id="CP000246">
    <property type="protein sequence ID" value="ABG83248.1"/>
    <property type="molecule type" value="Genomic_DNA"/>
</dbReference>
<dbReference type="RefSeq" id="WP_011591087.1">
    <property type="nucleotide sequence ID" value="NC_008261.1"/>
</dbReference>
<dbReference type="SMR" id="Q0TN64"/>
<dbReference type="STRING" id="195103.CPF_2536"/>
<dbReference type="PaxDb" id="195103-CPF_2536"/>
<dbReference type="GeneID" id="93001185"/>
<dbReference type="KEGG" id="cpf:CPF_2536"/>
<dbReference type="eggNOG" id="COG0689">
    <property type="taxonomic scope" value="Bacteria"/>
</dbReference>
<dbReference type="HOGENOM" id="CLU_050858_0_0_9"/>
<dbReference type="Proteomes" id="UP000001823">
    <property type="component" value="Chromosome"/>
</dbReference>
<dbReference type="GO" id="GO:0000175">
    <property type="term" value="F:3'-5'-RNA exonuclease activity"/>
    <property type="evidence" value="ECO:0007669"/>
    <property type="project" value="UniProtKB-UniRule"/>
</dbReference>
<dbReference type="GO" id="GO:0000049">
    <property type="term" value="F:tRNA binding"/>
    <property type="evidence" value="ECO:0007669"/>
    <property type="project" value="UniProtKB-UniRule"/>
</dbReference>
<dbReference type="GO" id="GO:0009022">
    <property type="term" value="F:tRNA nucleotidyltransferase activity"/>
    <property type="evidence" value="ECO:0007669"/>
    <property type="project" value="UniProtKB-UniRule"/>
</dbReference>
<dbReference type="GO" id="GO:0016075">
    <property type="term" value="P:rRNA catabolic process"/>
    <property type="evidence" value="ECO:0007669"/>
    <property type="project" value="UniProtKB-UniRule"/>
</dbReference>
<dbReference type="GO" id="GO:0006364">
    <property type="term" value="P:rRNA processing"/>
    <property type="evidence" value="ECO:0007669"/>
    <property type="project" value="UniProtKB-KW"/>
</dbReference>
<dbReference type="GO" id="GO:0008033">
    <property type="term" value="P:tRNA processing"/>
    <property type="evidence" value="ECO:0007669"/>
    <property type="project" value="UniProtKB-UniRule"/>
</dbReference>
<dbReference type="CDD" id="cd11362">
    <property type="entry name" value="RNase_PH_bact"/>
    <property type="match status" value="1"/>
</dbReference>
<dbReference type="FunFam" id="3.30.230.70:FF:000003">
    <property type="entry name" value="Ribonuclease PH"/>
    <property type="match status" value="1"/>
</dbReference>
<dbReference type="Gene3D" id="3.30.230.70">
    <property type="entry name" value="GHMP Kinase, N-terminal domain"/>
    <property type="match status" value="1"/>
</dbReference>
<dbReference type="HAMAP" id="MF_00564">
    <property type="entry name" value="RNase_PH"/>
    <property type="match status" value="1"/>
</dbReference>
<dbReference type="InterPro" id="IPR001247">
    <property type="entry name" value="ExoRNase_PH_dom1"/>
</dbReference>
<dbReference type="InterPro" id="IPR015847">
    <property type="entry name" value="ExoRNase_PH_dom2"/>
</dbReference>
<dbReference type="InterPro" id="IPR036345">
    <property type="entry name" value="ExoRNase_PH_dom2_sf"/>
</dbReference>
<dbReference type="InterPro" id="IPR027408">
    <property type="entry name" value="PNPase/RNase_PH_dom_sf"/>
</dbReference>
<dbReference type="InterPro" id="IPR020568">
    <property type="entry name" value="Ribosomal_Su5_D2-typ_SF"/>
</dbReference>
<dbReference type="InterPro" id="IPR050080">
    <property type="entry name" value="RNase_PH"/>
</dbReference>
<dbReference type="InterPro" id="IPR002381">
    <property type="entry name" value="RNase_PH_bac-type"/>
</dbReference>
<dbReference type="InterPro" id="IPR018336">
    <property type="entry name" value="RNase_PH_CS"/>
</dbReference>
<dbReference type="NCBIfam" id="TIGR01966">
    <property type="entry name" value="RNasePH"/>
    <property type="match status" value="1"/>
</dbReference>
<dbReference type="PANTHER" id="PTHR11953">
    <property type="entry name" value="EXOSOME COMPLEX COMPONENT"/>
    <property type="match status" value="1"/>
</dbReference>
<dbReference type="PANTHER" id="PTHR11953:SF0">
    <property type="entry name" value="EXOSOME COMPLEX COMPONENT RRP41"/>
    <property type="match status" value="1"/>
</dbReference>
<dbReference type="Pfam" id="PF01138">
    <property type="entry name" value="RNase_PH"/>
    <property type="match status" value="1"/>
</dbReference>
<dbReference type="Pfam" id="PF03725">
    <property type="entry name" value="RNase_PH_C"/>
    <property type="match status" value="1"/>
</dbReference>
<dbReference type="SUPFAM" id="SSF55666">
    <property type="entry name" value="Ribonuclease PH domain 2-like"/>
    <property type="match status" value="1"/>
</dbReference>
<dbReference type="SUPFAM" id="SSF54211">
    <property type="entry name" value="Ribosomal protein S5 domain 2-like"/>
    <property type="match status" value="1"/>
</dbReference>
<dbReference type="PROSITE" id="PS01277">
    <property type="entry name" value="RIBONUCLEASE_PH"/>
    <property type="match status" value="1"/>
</dbReference>
<protein>
    <recommendedName>
        <fullName evidence="1">Ribonuclease PH</fullName>
        <shortName evidence="1">RNase PH</shortName>
        <ecNumber evidence="1">2.7.7.56</ecNumber>
    </recommendedName>
    <alternativeName>
        <fullName evidence="1">tRNA nucleotidyltransferase</fullName>
    </alternativeName>
</protein>
<organism>
    <name type="scientific">Clostridium perfringens (strain ATCC 13124 / DSM 756 / JCM 1290 / NCIMB 6125 / NCTC 8237 / Type A)</name>
    <dbReference type="NCBI Taxonomy" id="195103"/>
    <lineage>
        <taxon>Bacteria</taxon>
        <taxon>Bacillati</taxon>
        <taxon>Bacillota</taxon>
        <taxon>Clostridia</taxon>
        <taxon>Eubacteriales</taxon>
        <taxon>Clostridiaceae</taxon>
        <taxon>Clostridium</taxon>
    </lineage>
</organism>
<evidence type="ECO:0000255" key="1">
    <source>
        <dbReference type="HAMAP-Rule" id="MF_00564"/>
    </source>
</evidence>
<keyword id="KW-0548">Nucleotidyltransferase</keyword>
<keyword id="KW-0694">RNA-binding</keyword>
<keyword id="KW-0698">rRNA processing</keyword>
<keyword id="KW-0808">Transferase</keyword>
<keyword id="KW-0819">tRNA processing</keyword>
<keyword id="KW-0820">tRNA-binding</keyword>
<sequence length="248" mass="27629">MRSSGRKKEQIRPVKITRNFTKYAEGSVLIEVGDTKVLCTASIEEKVPPFLKGSGEGWITAEYNMLPRSTQSRKQREINKLKIDGRTMEIQRLIGRALRSAVDMKALGEKTIWIDCDVLQADGGTRTTSITGSFVALVDAVNKLHQKKPFNVYPIRHFVSAVSVGIVGEEKVLDLCYEEDHVAKVDMNVVMTEEGEFIEIQGTGEAGPFSRKELDELLNLAEKGAKQMIQAQKDALKTDSLWIGTGRE</sequence>
<comment type="function">
    <text evidence="1">Phosphorolytic 3'-5' exoribonuclease that plays an important role in tRNA 3'-end maturation. Removes nucleotide residues following the 3'-CCA terminus of tRNAs; can also add nucleotides to the ends of RNA molecules by using nucleoside diphosphates as substrates, but this may not be physiologically important. Probably plays a role in initiation of 16S rRNA degradation (leading to ribosome degradation) during starvation.</text>
</comment>
<comment type="catalytic activity">
    <reaction evidence="1">
        <text>tRNA(n+1) + phosphate = tRNA(n) + a ribonucleoside 5'-diphosphate</text>
        <dbReference type="Rhea" id="RHEA:10628"/>
        <dbReference type="Rhea" id="RHEA-COMP:17343"/>
        <dbReference type="Rhea" id="RHEA-COMP:17344"/>
        <dbReference type="ChEBI" id="CHEBI:43474"/>
        <dbReference type="ChEBI" id="CHEBI:57930"/>
        <dbReference type="ChEBI" id="CHEBI:173114"/>
        <dbReference type="EC" id="2.7.7.56"/>
    </reaction>
</comment>
<comment type="subunit">
    <text evidence="1">Homohexameric ring arranged as a trimer of dimers.</text>
</comment>
<comment type="similarity">
    <text evidence="1">Belongs to the RNase PH family.</text>
</comment>
<name>RNPH_CLOP1</name>
<reference key="1">
    <citation type="journal article" date="2006" name="Genome Res.">
        <title>Skewed genomic variability in strains of the toxigenic bacterial pathogen, Clostridium perfringens.</title>
        <authorList>
            <person name="Myers G.S.A."/>
            <person name="Rasko D.A."/>
            <person name="Cheung J.K."/>
            <person name="Ravel J."/>
            <person name="Seshadri R."/>
            <person name="DeBoy R.T."/>
            <person name="Ren Q."/>
            <person name="Varga J."/>
            <person name="Awad M.M."/>
            <person name="Brinkac L.M."/>
            <person name="Daugherty S.C."/>
            <person name="Haft D.H."/>
            <person name="Dodson R.J."/>
            <person name="Madupu R."/>
            <person name="Nelson W.C."/>
            <person name="Rosovitz M.J."/>
            <person name="Sullivan S.A."/>
            <person name="Khouri H."/>
            <person name="Dimitrov G.I."/>
            <person name="Watkins K.L."/>
            <person name="Mulligan S."/>
            <person name="Benton J."/>
            <person name="Radune D."/>
            <person name="Fisher D.J."/>
            <person name="Atkins H.S."/>
            <person name="Hiscox T."/>
            <person name="Jost B.H."/>
            <person name="Billington S.J."/>
            <person name="Songer J.G."/>
            <person name="McClane B.A."/>
            <person name="Titball R.W."/>
            <person name="Rood J.I."/>
            <person name="Melville S.B."/>
            <person name="Paulsen I.T."/>
        </authorList>
    </citation>
    <scope>NUCLEOTIDE SEQUENCE [LARGE SCALE GENOMIC DNA]</scope>
    <source>
        <strain>ATCC 13124 / DSM 756 / JCM 1290 / NCIMB 6125 / NCTC 8237 / S 107 / Type A</strain>
    </source>
</reference>
<proteinExistence type="inferred from homology"/>
<feature type="chain" id="PRO_1000024796" description="Ribonuclease PH">
    <location>
        <begin position="1"/>
        <end position="248"/>
    </location>
</feature>
<feature type="binding site" evidence="1">
    <location>
        <position position="86"/>
    </location>
    <ligand>
        <name>phosphate</name>
        <dbReference type="ChEBI" id="CHEBI:43474"/>
        <note>substrate</note>
    </ligand>
</feature>
<feature type="binding site" evidence="1">
    <location>
        <begin position="124"/>
        <end position="126"/>
    </location>
    <ligand>
        <name>phosphate</name>
        <dbReference type="ChEBI" id="CHEBI:43474"/>
        <note>substrate</note>
    </ligand>
</feature>